<protein>
    <recommendedName>
        <fullName>Tuftelin-interacting protein 11</fullName>
    </recommendedName>
    <alternativeName>
        <fullName>Septin and tuftelin-interacting protein 1</fullName>
        <shortName>STIP-1</shortName>
    </alternativeName>
</protein>
<proteinExistence type="evidence at transcript level"/>
<name>TFP11_RABIT</name>
<comment type="function">
    <text evidence="1">Involved in pre-mRNA splicing, specifically in spliceosome disassembly during late-stage splicing events. Intron turnover seems to proceed through reactions in two lariat-intron associated complexes termed Intron Large (IL) and Intron Small (IS). In cooperation with DHX15 seems to mediate the transition of the U2, U5 and U6 snRNP-containing IL complex to the snRNP-free IS complex leading to efficient debranching and turnover of excised introns. May play a role in the differentiation of ameloblasts and odontoblasts or in the forming of the enamel extracellular matrix (By similarity).</text>
</comment>
<comment type="subunit">
    <text evidence="1">Identified in the spliceosome C complex. Found in the Intron Large (IL) complex, a post-mRNA release spliceosomal complex containing the excised intron, U2, U5 and U6 snRNPs, and splicing factors. Interacts with TUFT1. Interacts with DHX15; indicative for a recruitment of DHX15 to the IL complex. Interacts with GCFC2 (By similarity).</text>
</comment>
<comment type="subcellular location">
    <subcellularLocation>
        <location evidence="1">Cytoplasm</location>
    </subcellularLocation>
    <subcellularLocation>
        <location evidence="1">Nucleus</location>
    </subcellularLocation>
    <text evidence="1">In the nucleus localizes to unique speckle domains in close proximity to nuclear speckles and not identical to paraspeckles.</text>
</comment>
<comment type="similarity">
    <text evidence="6">Belongs to the TFP11/STIP family.</text>
</comment>
<keyword id="KW-0091">Biomineralization</keyword>
<keyword id="KW-0963">Cytoplasm</keyword>
<keyword id="KW-0507">mRNA processing</keyword>
<keyword id="KW-0508">mRNA splicing</keyword>
<keyword id="KW-0539">Nucleus</keyword>
<keyword id="KW-0597">Phosphoprotein</keyword>
<keyword id="KW-1185">Reference proteome</keyword>
<keyword id="KW-0747">Spliceosome</keyword>
<feature type="chain" id="PRO_0000342277" description="Tuftelin-interacting protein 11">
    <location>
        <begin position="1"/>
        <end position="837"/>
    </location>
</feature>
<feature type="domain" description="G-patch" evidence="4">
    <location>
        <begin position="149"/>
        <end position="195"/>
    </location>
</feature>
<feature type="region of interest" description="Required for interaction with DHX15" evidence="1">
    <location>
        <begin position="1"/>
        <end position="50"/>
    </location>
</feature>
<feature type="region of interest" description="Disordered" evidence="5">
    <location>
        <begin position="1"/>
        <end position="21"/>
    </location>
</feature>
<feature type="region of interest" description="Disordered" evidence="5">
    <location>
        <begin position="50"/>
        <end position="136"/>
    </location>
</feature>
<feature type="region of interest" description="Disordered" evidence="5">
    <location>
        <begin position="183"/>
        <end position="236"/>
    </location>
</feature>
<feature type="region of interest" description="Required for nuclear speckle localization" evidence="1">
    <location>
        <begin position="710"/>
        <end position="734"/>
    </location>
</feature>
<feature type="short sequence motif" description="Nuclear localization signal" evidence="1">
    <location>
        <begin position="700"/>
        <end position="705"/>
    </location>
</feature>
<feature type="compositionally biased region" description="Basic and acidic residues" evidence="5">
    <location>
        <begin position="1"/>
        <end position="13"/>
    </location>
</feature>
<feature type="compositionally biased region" description="Basic and acidic residues" evidence="5">
    <location>
        <begin position="50"/>
        <end position="64"/>
    </location>
</feature>
<feature type="compositionally biased region" description="Acidic residues" evidence="5">
    <location>
        <begin position="91"/>
        <end position="102"/>
    </location>
</feature>
<feature type="compositionally biased region" description="Basic and acidic residues" evidence="5">
    <location>
        <begin position="103"/>
        <end position="116"/>
    </location>
</feature>
<feature type="compositionally biased region" description="Basic and acidic residues" evidence="5">
    <location>
        <begin position="217"/>
        <end position="231"/>
    </location>
</feature>
<feature type="modified residue" description="Phosphoserine" evidence="2">
    <location>
        <position position="2"/>
    </location>
</feature>
<feature type="modified residue" description="Phosphoserine" evidence="3">
    <location>
        <position position="59"/>
    </location>
</feature>
<feature type="modified residue" description="Phosphoserine" evidence="3">
    <location>
        <position position="98"/>
    </location>
</feature>
<feature type="modified residue" description="Phosphoserine" evidence="3">
    <location>
        <position position="144"/>
    </location>
</feature>
<feature type="modified residue" description="Phosphoserine" evidence="3">
    <location>
        <position position="210"/>
    </location>
</feature>
<evidence type="ECO:0000250" key="1"/>
<evidence type="ECO:0000250" key="2">
    <source>
        <dbReference type="UniProtKB" id="Q5U2Y6"/>
    </source>
</evidence>
<evidence type="ECO:0000250" key="3">
    <source>
        <dbReference type="UniProtKB" id="Q9UBB9"/>
    </source>
</evidence>
<evidence type="ECO:0000255" key="4">
    <source>
        <dbReference type="PROSITE-ProRule" id="PRU00092"/>
    </source>
</evidence>
<evidence type="ECO:0000256" key="5">
    <source>
        <dbReference type="SAM" id="MobiDB-lite"/>
    </source>
</evidence>
<evidence type="ECO:0000305" key="6"/>
<reference key="1">
    <citation type="journal article" date="2007" name="Exp. Cell Res.">
        <title>Characterization of STIP, a multi-domain nuclear protein, highly conserved in metazoans, and essential for embryogenesis in Caenorhabditis elegans.</title>
        <authorList>
            <person name="Ji Q."/>
            <person name="Huang C.-H."/>
            <person name="Peng J."/>
            <person name="Hashmi S."/>
            <person name="Ye T."/>
            <person name="Chen Y."/>
        </authorList>
    </citation>
    <scope>NUCLEOTIDE SEQUENCE [MRNA]</scope>
</reference>
<organism>
    <name type="scientific">Oryctolagus cuniculus</name>
    <name type="common">Rabbit</name>
    <dbReference type="NCBI Taxonomy" id="9986"/>
    <lineage>
        <taxon>Eukaryota</taxon>
        <taxon>Metazoa</taxon>
        <taxon>Chordata</taxon>
        <taxon>Craniata</taxon>
        <taxon>Vertebrata</taxon>
        <taxon>Euteleostomi</taxon>
        <taxon>Mammalia</taxon>
        <taxon>Eutheria</taxon>
        <taxon>Euarchontoglires</taxon>
        <taxon>Glires</taxon>
        <taxon>Lagomorpha</taxon>
        <taxon>Leporidae</taxon>
        <taxon>Oryctolagus</taxon>
    </lineage>
</organism>
<dbReference type="EMBL" id="EF443269">
    <property type="protein sequence ID" value="ABP04112.1"/>
    <property type="molecule type" value="mRNA"/>
</dbReference>
<dbReference type="RefSeq" id="NP_001093435.1">
    <property type="nucleotide sequence ID" value="NM_001099965.1"/>
</dbReference>
<dbReference type="SMR" id="A4UMC5"/>
<dbReference type="FunCoup" id="A4UMC5">
    <property type="interactions" value="2505"/>
</dbReference>
<dbReference type="STRING" id="9986.ENSOCUP00000005447"/>
<dbReference type="PaxDb" id="9986-ENSOCUP00000005447"/>
<dbReference type="GeneID" id="100101578"/>
<dbReference type="KEGG" id="ocu:100101578"/>
<dbReference type="CTD" id="24144"/>
<dbReference type="eggNOG" id="KOG2184">
    <property type="taxonomic scope" value="Eukaryota"/>
</dbReference>
<dbReference type="InParanoid" id="A4UMC5"/>
<dbReference type="OrthoDB" id="4822at2759"/>
<dbReference type="Proteomes" id="UP000001811">
    <property type="component" value="Unplaced"/>
</dbReference>
<dbReference type="GO" id="GO:0005737">
    <property type="term" value="C:cytoplasm"/>
    <property type="evidence" value="ECO:0007669"/>
    <property type="project" value="UniProtKB-SubCell"/>
</dbReference>
<dbReference type="GO" id="GO:0005681">
    <property type="term" value="C:spliceosomal complex"/>
    <property type="evidence" value="ECO:0000250"/>
    <property type="project" value="UniProtKB"/>
</dbReference>
<dbReference type="GO" id="GO:0071008">
    <property type="term" value="C:U2-type post-mRNA release spliceosomal complex"/>
    <property type="evidence" value="ECO:0000250"/>
    <property type="project" value="UniProtKB"/>
</dbReference>
<dbReference type="GO" id="GO:0003676">
    <property type="term" value="F:nucleic acid binding"/>
    <property type="evidence" value="ECO:0007669"/>
    <property type="project" value="InterPro"/>
</dbReference>
<dbReference type="GO" id="GO:0031214">
    <property type="term" value="P:biomineral tissue development"/>
    <property type="evidence" value="ECO:0007669"/>
    <property type="project" value="UniProtKB-KW"/>
</dbReference>
<dbReference type="GO" id="GO:0000390">
    <property type="term" value="P:spliceosomal complex disassembly"/>
    <property type="evidence" value="ECO:0000250"/>
    <property type="project" value="UniProtKB"/>
</dbReference>
<dbReference type="InterPro" id="IPR000467">
    <property type="entry name" value="G_patch_dom"/>
</dbReference>
<dbReference type="InterPro" id="IPR022783">
    <property type="entry name" value="GCFC_dom"/>
</dbReference>
<dbReference type="InterPro" id="IPR022159">
    <property type="entry name" value="STIP/TFIP11_N"/>
</dbReference>
<dbReference type="InterPro" id="IPR024933">
    <property type="entry name" value="TFP11"/>
</dbReference>
<dbReference type="InterPro" id="IPR045211">
    <property type="entry name" value="TFP11/STIP/Ntr1"/>
</dbReference>
<dbReference type="PANTHER" id="PTHR23329:SF1">
    <property type="entry name" value="TUFTELIN-INTERACTING PROTEIN 11"/>
    <property type="match status" value="1"/>
</dbReference>
<dbReference type="PANTHER" id="PTHR23329">
    <property type="entry name" value="TUFTELIN-INTERACTING PROTEIN 11-RELATED"/>
    <property type="match status" value="1"/>
</dbReference>
<dbReference type="Pfam" id="PF01585">
    <property type="entry name" value="G-patch"/>
    <property type="match status" value="1"/>
</dbReference>
<dbReference type="Pfam" id="PF07842">
    <property type="entry name" value="GCFC"/>
    <property type="match status" value="1"/>
</dbReference>
<dbReference type="Pfam" id="PF12457">
    <property type="entry name" value="TIP_N"/>
    <property type="match status" value="1"/>
</dbReference>
<dbReference type="PIRSF" id="PIRSF017706">
    <property type="entry name" value="TFIP11"/>
    <property type="match status" value="1"/>
</dbReference>
<dbReference type="SMART" id="SM00443">
    <property type="entry name" value="G_patch"/>
    <property type="match status" value="1"/>
</dbReference>
<dbReference type="PROSITE" id="PS50174">
    <property type="entry name" value="G_PATCH"/>
    <property type="match status" value="1"/>
</dbReference>
<gene>
    <name type="primary">TFIP11</name>
    <name type="synonym">STIP</name>
</gene>
<accession>A4UMC5</accession>
<sequence>MSLSHLYRDGEGRVDDDDDERENFEITDWDLQNEFNPNRQRHWQTKEEATYGVWAEHDSDDERPSFGGKRPRDYSAPVNFISAGLKKGAAEEAELDDSEDEEKPGKQEELPKDLGPKKLKTGGNFKPSQKGFAGGTKSFMDFGSWERHTKGIGQKLLQKMGYVPGRGLGKNAQGIINPIEAKQRKGKGAVGAYGSERTTQSLQDFPVVDSEEEAEEEFQKELSQWRKDPSGSKKKPKYSYKTVEELKAKGRVSKKLSAPQKEISQVKVIDMTGREQKVYYSYSQISHKHSVPDEGLPLQAQPPPVPGKEAKAPGFALPELEHNLQLLIELTEQEIIQNDRQLQYERDMVVNLSHELDKMAEVLEHEERAIANLSKVLELVEQCARRLQPACSNPLTLDECARVFQTLQDKYYEEYRMSDRVDLAVAIVYPLMKDYFKDWDSLKDCRYGTEIISKWKSLLENDQLLSHGGQDLLADAFHRLMWEVWMPFVRNIVTQWQPRNCDPMVDFLDSWVHIIPVWVLDNILDQLIFPKLQKEVENWNPLTDTVPIHSWIHPWLPLMQARLEPLYSPIRSKLSSALQKWHPSDSSAKLILQPWKDVFTPGSWEAFMVKNIVPKLGMCLGELVINPHQQHMDAFYWVIDWEGMISVSSLVGLLEKHFFPKWLQVLCSWLSNSPNYEEITKWYLGWKSMFSDQVLAHPSVKDKFNEALDIMNRAVSSNVGAYMQPGARENIAYLTHTERRKDFQYEAMQERREAENMAQRGIGAAASSVPMNFKDLIETKAEEHNIVFMPVIGKRHEGKQLYTFGRIVIYIDRGVVFVQGEKTWVPTSLQSLIDMAK</sequence>